<feature type="chain" id="PRO_0000320059" description="Large ribosomal subunit protein eL13">
    <location>
        <begin position="1"/>
        <end position="209"/>
    </location>
</feature>
<proteinExistence type="evidence at protein level"/>
<sequence>MPIHNKVLSNDHFRKHWQMRVRTWFNQPARKIRRRNNRIEKAAKVFPRPIATLKPVVRGSTIRYNMKVRAGRGFTLEELKAAGLTAQYARTIGIAVDTRRVNKTQQSLTLNTQRLKNYQSKLVLFPRKVNAPKKGEATKEEVAKAVQTLKPFTVKSAIAVTCEQTPRKPTEAEKKFSAYATLKAADSKAKTVGIRRKAAEIKAAKAAEK</sequence>
<gene>
    <name type="primary">rpl13</name>
    <name type="ORF">DDB_G0291870</name>
</gene>
<comment type="function">
    <text evidence="1">Component of the ribosome, a large ribonucleoprotein complex responsible for the synthesis of proteins in the cell. The small ribosomal subunit (SSU) binds messenger RNAs (mRNAs) and translates the encoded message by selecting cognate aminoacyl-transfer RNA (tRNA) molecules. The large subunit (LSU) contains the ribosomal catalytic site termed the peptidyl transferase center (PTC), which catalyzes the formation of peptide bonds, thereby polymerizing the amino acids delivered by tRNAs into a polypeptide chain. The nascent polypeptides leave the ribosome through a tunnel in the LSU and interact with protein factors that function in enzymatic processing, targeting, and the membrane insertion of nascent chains at the exit of the ribosomal tunnel. As part of the LSU, it is probably required for its formation and the maturation of rRNAs.</text>
</comment>
<comment type="subunit">
    <text evidence="1">Component of the 60S large ribosomal subunit (LSU).</text>
</comment>
<comment type="subcellular location">
    <subcellularLocation>
        <location evidence="1">Cytoplasm</location>
    </subcellularLocation>
</comment>
<comment type="similarity">
    <text evidence="2">Belongs to the eukaryotic ribosomal protein eL13 family.</text>
</comment>
<dbReference type="EMBL" id="AAFI02000186">
    <property type="protein sequence ID" value="EAL61465.1"/>
    <property type="molecule type" value="Genomic_DNA"/>
</dbReference>
<dbReference type="RefSeq" id="XP_629876.1">
    <property type="nucleotide sequence ID" value="XM_629874.1"/>
</dbReference>
<dbReference type="SMR" id="Q54E20"/>
<dbReference type="FunCoup" id="Q54E20">
    <property type="interactions" value="697"/>
</dbReference>
<dbReference type="STRING" id="44689.Q54E20"/>
<dbReference type="PaxDb" id="44689-DDB0229951"/>
<dbReference type="EnsemblProtists" id="EAL61465">
    <property type="protein sequence ID" value="EAL61465"/>
    <property type="gene ID" value="DDB_G0291870"/>
</dbReference>
<dbReference type="GeneID" id="8628374"/>
<dbReference type="KEGG" id="ddi:DDB_G0291870"/>
<dbReference type="dictyBase" id="DDB_G0291870">
    <property type="gene designation" value="rpl13"/>
</dbReference>
<dbReference type="VEuPathDB" id="AmoebaDB:DDB_G0291870"/>
<dbReference type="eggNOG" id="KOG3295">
    <property type="taxonomic scope" value="Eukaryota"/>
</dbReference>
<dbReference type="HOGENOM" id="CLU_075696_1_0_1"/>
<dbReference type="InParanoid" id="Q54E20"/>
<dbReference type="OMA" id="IQKNHFR"/>
<dbReference type="PhylomeDB" id="Q54E20"/>
<dbReference type="Reactome" id="R-DDI-156827">
    <property type="pathway name" value="L13a-mediated translational silencing of Ceruloplasmin expression"/>
</dbReference>
<dbReference type="Reactome" id="R-DDI-1799339">
    <property type="pathway name" value="SRP-dependent cotranslational protein targeting to membrane"/>
</dbReference>
<dbReference type="Reactome" id="R-DDI-72689">
    <property type="pathway name" value="Formation of a pool of free 40S subunits"/>
</dbReference>
<dbReference type="Reactome" id="R-DDI-72706">
    <property type="pathway name" value="GTP hydrolysis and joining of the 60S ribosomal subunit"/>
</dbReference>
<dbReference type="Reactome" id="R-DDI-975956">
    <property type="pathway name" value="Nonsense Mediated Decay (NMD) independent of the Exon Junction Complex (EJC)"/>
</dbReference>
<dbReference type="Reactome" id="R-DDI-975957">
    <property type="pathway name" value="Nonsense Mediated Decay (NMD) enhanced by the Exon Junction Complex (EJC)"/>
</dbReference>
<dbReference type="PRO" id="PR:Q54E20"/>
<dbReference type="Proteomes" id="UP000002195">
    <property type="component" value="Chromosome 6"/>
</dbReference>
<dbReference type="GO" id="GO:0005829">
    <property type="term" value="C:cytosol"/>
    <property type="evidence" value="ECO:0000250"/>
    <property type="project" value="UniProtKB"/>
</dbReference>
<dbReference type="GO" id="GO:0022625">
    <property type="term" value="C:cytosolic large ribosomal subunit"/>
    <property type="evidence" value="ECO:0000318"/>
    <property type="project" value="GO_Central"/>
</dbReference>
<dbReference type="GO" id="GO:0031012">
    <property type="term" value="C:extracellular matrix"/>
    <property type="evidence" value="ECO:0007005"/>
    <property type="project" value="dictyBase"/>
</dbReference>
<dbReference type="GO" id="GO:0003723">
    <property type="term" value="F:RNA binding"/>
    <property type="evidence" value="ECO:0000318"/>
    <property type="project" value="GO_Central"/>
</dbReference>
<dbReference type="GO" id="GO:0003735">
    <property type="term" value="F:structural constituent of ribosome"/>
    <property type="evidence" value="ECO:0000318"/>
    <property type="project" value="GO_Central"/>
</dbReference>
<dbReference type="GO" id="GO:0006412">
    <property type="term" value="P:translation"/>
    <property type="evidence" value="ECO:0007669"/>
    <property type="project" value="InterPro"/>
</dbReference>
<dbReference type="Gene3D" id="1.20.5.110">
    <property type="match status" value="1"/>
</dbReference>
<dbReference type="HAMAP" id="MF_00499">
    <property type="entry name" value="Ribosomal_eL13"/>
    <property type="match status" value="1"/>
</dbReference>
<dbReference type="InterPro" id="IPR001380">
    <property type="entry name" value="Ribosomal_eL13"/>
</dbReference>
<dbReference type="InterPro" id="IPR018256">
    <property type="entry name" value="Ribosomal_eL13_CS"/>
</dbReference>
<dbReference type="PANTHER" id="PTHR11722">
    <property type="entry name" value="60S RIBOSOMAL PROTEIN L13"/>
    <property type="match status" value="1"/>
</dbReference>
<dbReference type="PANTHER" id="PTHR11722:SF0">
    <property type="entry name" value="LARGE RIBOSOMAL SUBUNIT PROTEIN EL13"/>
    <property type="match status" value="1"/>
</dbReference>
<dbReference type="Pfam" id="PF01294">
    <property type="entry name" value="Ribosomal_L13e"/>
    <property type="match status" value="1"/>
</dbReference>
<dbReference type="PROSITE" id="PS01104">
    <property type="entry name" value="RIBOSOMAL_L13E"/>
    <property type="match status" value="1"/>
</dbReference>
<organism>
    <name type="scientific">Dictyostelium discoideum</name>
    <name type="common">Social amoeba</name>
    <dbReference type="NCBI Taxonomy" id="44689"/>
    <lineage>
        <taxon>Eukaryota</taxon>
        <taxon>Amoebozoa</taxon>
        <taxon>Evosea</taxon>
        <taxon>Eumycetozoa</taxon>
        <taxon>Dictyostelia</taxon>
        <taxon>Dictyosteliales</taxon>
        <taxon>Dictyosteliaceae</taxon>
        <taxon>Dictyostelium</taxon>
    </lineage>
</organism>
<accession>Q54E20</accession>
<protein>
    <recommendedName>
        <fullName evidence="2">Large ribosomal subunit protein eL13</fullName>
    </recommendedName>
    <alternativeName>
        <fullName>60S ribosomal protein L13</fullName>
    </alternativeName>
</protein>
<evidence type="ECO:0000250" key="1">
    <source>
        <dbReference type="UniProtKB" id="P26373"/>
    </source>
</evidence>
<evidence type="ECO:0000305" key="2"/>
<keyword id="KW-0963">Cytoplasm</keyword>
<keyword id="KW-0903">Direct protein sequencing</keyword>
<keyword id="KW-1185">Reference proteome</keyword>
<keyword id="KW-0687">Ribonucleoprotein</keyword>
<keyword id="KW-0689">Ribosomal protein</keyword>
<reference key="1">
    <citation type="journal article" date="2005" name="Nature">
        <title>The genome of the social amoeba Dictyostelium discoideum.</title>
        <authorList>
            <person name="Eichinger L."/>
            <person name="Pachebat J.A."/>
            <person name="Gloeckner G."/>
            <person name="Rajandream M.A."/>
            <person name="Sucgang R."/>
            <person name="Berriman M."/>
            <person name="Song J."/>
            <person name="Olsen R."/>
            <person name="Szafranski K."/>
            <person name="Xu Q."/>
            <person name="Tunggal B."/>
            <person name="Kummerfeld S."/>
            <person name="Madera M."/>
            <person name="Konfortov B.A."/>
            <person name="Rivero F."/>
            <person name="Bankier A.T."/>
            <person name="Lehmann R."/>
            <person name="Hamlin N."/>
            <person name="Davies R."/>
            <person name="Gaudet P."/>
            <person name="Fey P."/>
            <person name="Pilcher K."/>
            <person name="Chen G."/>
            <person name="Saunders D."/>
            <person name="Sodergren E.J."/>
            <person name="Davis P."/>
            <person name="Kerhornou A."/>
            <person name="Nie X."/>
            <person name="Hall N."/>
            <person name="Anjard C."/>
            <person name="Hemphill L."/>
            <person name="Bason N."/>
            <person name="Farbrother P."/>
            <person name="Desany B."/>
            <person name="Just E."/>
            <person name="Morio T."/>
            <person name="Rost R."/>
            <person name="Churcher C.M."/>
            <person name="Cooper J."/>
            <person name="Haydock S."/>
            <person name="van Driessche N."/>
            <person name="Cronin A."/>
            <person name="Goodhead I."/>
            <person name="Muzny D.M."/>
            <person name="Mourier T."/>
            <person name="Pain A."/>
            <person name="Lu M."/>
            <person name="Harper D."/>
            <person name="Lindsay R."/>
            <person name="Hauser H."/>
            <person name="James K.D."/>
            <person name="Quiles M."/>
            <person name="Madan Babu M."/>
            <person name="Saito T."/>
            <person name="Buchrieser C."/>
            <person name="Wardroper A."/>
            <person name="Felder M."/>
            <person name="Thangavelu M."/>
            <person name="Johnson D."/>
            <person name="Knights A."/>
            <person name="Loulseged H."/>
            <person name="Mungall K.L."/>
            <person name="Oliver K."/>
            <person name="Price C."/>
            <person name="Quail M.A."/>
            <person name="Urushihara H."/>
            <person name="Hernandez J."/>
            <person name="Rabbinowitsch E."/>
            <person name="Steffen D."/>
            <person name="Sanders M."/>
            <person name="Ma J."/>
            <person name="Kohara Y."/>
            <person name="Sharp S."/>
            <person name="Simmonds M.N."/>
            <person name="Spiegler S."/>
            <person name="Tivey A."/>
            <person name="Sugano S."/>
            <person name="White B."/>
            <person name="Walker D."/>
            <person name="Woodward J.R."/>
            <person name="Winckler T."/>
            <person name="Tanaka Y."/>
            <person name="Shaulsky G."/>
            <person name="Schleicher M."/>
            <person name="Weinstock G.M."/>
            <person name="Rosenthal A."/>
            <person name="Cox E.C."/>
            <person name="Chisholm R.L."/>
            <person name="Gibbs R.A."/>
            <person name="Loomis W.F."/>
            <person name="Platzer M."/>
            <person name="Kay R.R."/>
            <person name="Williams J.G."/>
            <person name="Dear P.H."/>
            <person name="Noegel A.A."/>
            <person name="Barrell B.G."/>
            <person name="Kuspa A."/>
        </authorList>
    </citation>
    <scope>NUCLEOTIDE SEQUENCE [LARGE SCALE GENOMIC DNA]</scope>
    <source>
        <strain>AX4</strain>
    </source>
</reference>
<reference key="2">
    <citation type="submission" date="2010-01" db="UniProtKB">
        <authorList>
            <person name="Bienvenut W.V."/>
            <person name="Veltman D.M."/>
            <person name="Insall R.H."/>
        </authorList>
    </citation>
    <scope>PROTEIN SEQUENCE OF 23-30; 45-58; 73-114 AND 145-167</scope>
    <scope>IDENTIFICATION BY MASS SPECTROMETRY</scope>
</reference>
<name>RL13_DICDI</name>